<reference key="1">
    <citation type="journal article" date="2009" name="PLoS Genet.">
        <title>Organised genome dynamics in the Escherichia coli species results in highly diverse adaptive paths.</title>
        <authorList>
            <person name="Touchon M."/>
            <person name="Hoede C."/>
            <person name="Tenaillon O."/>
            <person name="Barbe V."/>
            <person name="Baeriswyl S."/>
            <person name="Bidet P."/>
            <person name="Bingen E."/>
            <person name="Bonacorsi S."/>
            <person name="Bouchier C."/>
            <person name="Bouvet O."/>
            <person name="Calteau A."/>
            <person name="Chiapello H."/>
            <person name="Clermont O."/>
            <person name="Cruveiller S."/>
            <person name="Danchin A."/>
            <person name="Diard M."/>
            <person name="Dossat C."/>
            <person name="Karoui M.E."/>
            <person name="Frapy E."/>
            <person name="Garry L."/>
            <person name="Ghigo J.M."/>
            <person name="Gilles A.M."/>
            <person name="Johnson J."/>
            <person name="Le Bouguenec C."/>
            <person name="Lescat M."/>
            <person name="Mangenot S."/>
            <person name="Martinez-Jehanne V."/>
            <person name="Matic I."/>
            <person name="Nassif X."/>
            <person name="Oztas S."/>
            <person name="Petit M.A."/>
            <person name="Pichon C."/>
            <person name="Rouy Z."/>
            <person name="Ruf C.S."/>
            <person name="Schneider D."/>
            <person name="Tourret J."/>
            <person name="Vacherie B."/>
            <person name="Vallenet D."/>
            <person name="Medigue C."/>
            <person name="Rocha E.P.C."/>
            <person name="Denamur E."/>
        </authorList>
    </citation>
    <scope>NUCLEOTIDE SEQUENCE [LARGE SCALE GENOMIC DNA]</scope>
    <source>
        <strain>IAI39 / ExPEC</strain>
    </source>
</reference>
<dbReference type="EC" id="5.4.3.8" evidence="1"/>
<dbReference type="EMBL" id="CU928164">
    <property type="protein sequence ID" value="CAR16298.1"/>
    <property type="molecule type" value="Genomic_DNA"/>
</dbReference>
<dbReference type="RefSeq" id="WP_000045309.1">
    <property type="nucleotide sequence ID" value="NC_011750.1"/>
</dbReference>
<dbReference type="RefSeq" id="YP_002406204.1">
    <property type="nucleotide sequence ID" value="NC_011750.1"/>
</dbReference>
<dbReference type="SMR" id="B7NIB7"/>
<dbReference type="STRING" id="585057.ECIAI39_0158"/>
<dbReference type="KEGG" id="ect:ECIAI39_0158"/>
<dbReference type="PATRIC" id="fig|585057.6.peg.171"/>
<dbReference type="HOGENOM" id="CLU_016922_1_5_6"/>
<dbReference type="UniPathway" id="UPA00251">
    <property type="reaction ID" value="UER00317"/>
</dbReference>
<dbReference type="Proteomes" id="UP000000749">
    <property type="component" value="Chromosome"/>
</dbReference>
<dbReference type="GO" id="GO:0005737">
    <property type="term" value="C:cytoplasm"/>
    <property type="evidence" value="ECO:0007669"/>
    <property type="project" value="UniProtKB-SubCell"/>
</dbReference>
<dbReference type="GO" id="GO:0042286">
    <property type="term" value="F:glutamate-1-semialdehyde 2,1-aminomutase activity"/>
    <property type="evidence" value="ECO:0007669"/>
    <property type="project" value="UniProtKB-UniRule"/>
</dbReference>
<dbReference type="GO" id="GO:0030170">
    <property type="term" value="F:pyridoxal phosphate binding"/>
    <property type="evidence" value="ECO:0007669"/>
    <property type="project" value="InterPro"/>
</dbReference>
<dbReference type="GO" id="GO:0008483">
    <property type="term" value="F:transaminase activity"/>
    <property type="evidence" value="ECO:0007669"/>
    <property type="project" value="InterPro"/>
</dbReference>
<dbReference type="GO" id="GO:0006782">
    <property type="term" value="P:protoporphyrinogen IX biosynthetic process"/>
    <property type="evidence" value="ECO:0007669"/>
    <property type="project" value="UniProtKB-UniRule"/>
</dbReference>
<dbReference type="CDD" id="cd00610">
    <property type="entry name" value="OAT_like"/>
    <property type="match status" value="1"/>
</dbReference>
<dbReference type="FunFam" id="3.40.640.10:FF:000021">
    <property type="entry name" value="Glutamate-1-semialdehyde 2,1-aminomutase"/>
    <property type="match status" value="1"/>
</dbReference>
<dbReference type="FunFam" id="3.90.1150.10:FF:000012">
    <property type="entry name" value="Glutamate-1-semialdehyde 2,1-aminomutase"/>
    <property type="match status" value="1"/>
</dbReference>
<dbReference type="Gene3D" id="3.90.1150.10">
    <property type="entry name" value="Aspartate Aminotransferase, domain 1"/>
    <property type="match status" value="1"/>
</dbReference>
<dbReference type="Gene3D" id="3.40.640.10">
    <property type="entry name" value="Type I PLP-dependent aspartate aminotransferase-like (Major domain)"/>
    <property type="match status" value="1"/>
</dbReference>
<dbReference type="HAMAP" id="MF_00375">
    <property type="entry name" value="HemL_aminotrans_3"/>
    <property type="match status" value="1"/>
</dbReference>
<dbReference type="InterPro" id="IPR004639">
    <property type="entry name" value="4pyrrol_synth_GluAld_NH2Trfase"/>
</dbReference>
<dbReference type="InterPro" id="IPR005814">
    <property type="entry name" value="Aminotrans_3"/>
</dbReference>
<dbReference type="InterPro" id="IPR049704">
    <property type="entry name" value="Aminotrans_3_PPA_site"/>
</dbReference>
<dbReference type="InterPro" id="IPR015424">
    <property type="entry name" value="PyrdxlP-dep_Trfase"/>
</dbReference>
<dbReference type="InterPro" id="IPR015421">
    <property type="entry name" value="PyrdxlP-dep_Trfase_major"/>
</dbReference>
<dbReference type="InterPro" id="IPR015422">
    <property type="entry name" value="PyrdxlP-dep_Trfase_small"/>
</dbReference>
<dbReference type="NCBIfam" id="TIGR00713">
    <property type="entry name" value="hemL"/>
    <property type="match status" value="1"/>
</dbReference>
<dbReference type="NCBIfam" id="NF000818">
    <property type="entry name" value="PRK00062.1"/>
    <property type="match status" value="1"/>
</dbReference>
<dbReference type="PANTHER" id="PTHR43713">
    <property type="entry name" value="GLUTAMATE-1-SEMIALDEHYDE 2,1-AMINOMUTASE"/>
    <property type="match status" value="1"/>
</dbReference>
<dbReference type="PANTHER" id="PTHR43713:SF3">
    <property type="entry name" value="GLUTAMATE-1-SEMIALDEHYDE 2,1-AMINOMUTASE 1, CHLOROPLASTIC-RELATED"/>
    <property type="match status" value="1"/>
</dbReference>
<dbReference type="Pfam" id="PF00202">
    <property type="entry name" value="Aminotran_3"/>
    <property type="match status" value="1"/>
</dbReference>
<dbReference type="SUPFAM" id="SSF53383">
    <property type="entry name" value="PLP-dependent transferases"/>
    <property type="match status" value="1"/>
</dbReference>
<dbReference type="PROSITE" id="PS00600">
    <property type="entry name" value="AA_TRANSFER_CLASS_3"/>
    <property type="match status" value="1"/>
</dbReference>
<comment type="catalytic activity">
    <reaction evidence="1">
        <text>(S)-4-amino-5-oxopentanoate = 5-aminolevulinate</text>
        <dbReference type="Rhea" id="RHEA:14265"/>
        <dbReference type="ChEBI" id="CHEBI:57501"/>
        <dbReference type="ChEBI" id="CHEBI:356416"/>
        <dbReference type="EC" id="5.4.3.8"/>
    </reaction>
</comment>
<comment type="cofactor">
    <cofactor evidence="1">
        <name>pyridoxal 5'-phosphate</name>
        <dbReference type="ChEBI" id="CHEBI:597326"/>
    </cofactor>
</comment>
<comment type="pathway">
    <text evidence="1">Porphyrin-containing compound metabolism; protoporphyrin-IX biosynthesis; 5-aminolevulinate from L-glutamyl-tRNA(Glu): step 2/2.</text>
</comment>
<comment type="subunit">
    <text evidence="1">Homodimer.</text>
</comment>
<comment type="subcellular location">
    <subcellularLocation>
        <location evidence="1">Cytoplasm</location>
    </subcellularLocation>
</comment>
<comment type="similarity">
    <text evidence="1">Belongs to the class-III pyridoxal-phosphate-dependent aminotransferase family. HemL subfamily.</text>
</comment>
<feature type="chain" id="PRO_1000121881" description="Glutamate-1-semialdehyde 2,1-aminomutase">
    <location>
        <begin position="1"/>
        <end position="426"/>
    </location>
</feature>
<feature type="modified residue" description="N6-(pyridoxal phosphate)lysine" evidence="1">
    <location>
        <position position="265"/>
    </location>
</feature>
<gene>
    <name evidence="1" type="primary">hemL</name>
    <name type="ordered locus">ECIAI39_0158</name>
</gene>
<protein>
    <recommendedName>
        <fullName evidence="1">Glutamate-1-semialdehyde 2,1-aminomutase</fullName>
        <shortName evidence="1">GSA</shortName>
        <ecNumber evidence="1">5.4.3.8</ecNumber>
    </recommendedName>
    <alternativeName>
        <fullName evidence="1">Glutamate-1-semialdehyde aminotransferase</fullName>
        <shortName evidence="1">GSA-AT</shortName>
    </alternativeName>
</protein>
<sequence length="426" mass="45383">MSKSENLYSAARELIPGGVNSPVRAFTGVGGTPLFIEKADGAYLYDVDGKAYIDYVGSWGPMVLGHNHPAIRNAVIEAAERGLSFGAPTEMEVKMAQLVTELVPTMDMVRMVNSGTEATMSAIRLARGFTGRDKIIKFEGCYHGHADCLLVKAGSGALTLGQPNSPGVPADFAKHTLTCTYNDLASVRAAFEQYPQEIACIIVEPVAGNMNCVPPLPEFLPGLRALCDEFGALLIIDEVMTGFRVALAGAQDYYGVVPDLTCLGKIIGGGMPVGAFGGRRDVMDALAPTGPVYQAGTLSGNPIAMAAGFACLNEVAQPGVHETLDELTTRLAEGLREAAEEAGIPLVVNHVGGMFGIFFTDAESVTCYQDVMACDVERFKRFFHMMLDEGVYLAPSAFEAGFMSVAHSMEDINNTIDAARRVFAKL</sequence>
<keyword id="KW-0963">Cytoplasm</keyword>
<keyword id="KW-0413">Isomerase</keyword>
<keyword id="KW-0627">Porphyrin biosynthesis</keyword>
<keyword id="KW-0663">Pyridoxal phosphate</keyword>
<accession>B7NIB7</accession>
<organism>
    <name type="scientific">Escherichia coli O7:K1 (strain IAI39 / ExPEC)</name>
    <dbReference type="NCBI Taxonomy" id="585057"/>
    <lineage>
        <taxon>Bacteria</taxon>
        <taxon>Pseudomonadati</taxon>
        <taxon>Pseudomonadota</taxon>
        <taxon>Gammaproteobacteria</taxon>
        <taxon>Enterobacterales</taxon>
        <taxon>Enterobacteriaceae</taxon>
        <taxon>Escherichia</taxon>
    </lineage>
</organism>
<evidence type="ECO:0000255" key="1">
    <source>
        <dbReference type="HAMAP-Rule" id="MF_00375"/>
    </source>
</evidence>
<proteinExistence type="inferred from homology"/>
<name>GSA_ECO7I</name>